<proteinExistence type="inferred from homology"/>
<reference key="1">
    <citation type="submission" date="2006-10" db="EMBL/GenBank/DDBJ databases">
        <title>Complete sequence of chromosome of Pelobacter propionicus DSM 2379.</title>
        <authorList>
            <consortium name="US DOE Joint Genome Institute"/>
            <person name="Copeland A."/>
            <person name="Lucas S."/>
            <person name="Lapidus A."/>
            <person name="Barry K."/>
            <person name="Detter J.C."/>
            <person name="Glavina del Rio T."/>
            <person name="Hammon N."/>
            <person name="Israni S."/>
            <person name="Dalin E."/>
            <person name="Tice H."/>
            <person name="Pitluck S."/>
            <person name="Saunders E."/>
            <person name="Brettin T."/>
            <person name="Bruce D."/>
            <person name="Han C."/>
            <person name="Tapia R."/>
            <person name="Schmutz J."/>
            <person name="Larimer F."/>
            <person name="Land M."/>
            <person name="Hauser L."/>
            <person name="Kyrpides N."/>
            <person name="Kim E."/>
            <person name="Lovley D."/>
            <person name="Richardson P."/>
        </authorList>
    </citation>
    <scope>NUCLEOTIDE SEQUENCE [LARGE SCALE GENOMIC DNA]</scope>
    <source>
        <strain>DSM 2379 / NBRC 103807 / OttBd1</strain>
    </source>
</reference>
<name>COBD_PELPD</name>
<dbReference type="EMBL" id="CP000482">
    <property type="protein sequence ID" value="ABK98499.1"/>
    <property type="molecule type" value="Genomic_DNA"/>
</dbReference>
<dbReference type="RefSeq" id="WP_011734810.1">
    <property type="nucleotide sequence ID" value="NC_008609.1"/>
</dbReference>
<dbReference type="STRING" id="338966.Ppro_0870"/>
<dbReference type="KEGG" id="ppd:Ppro_0870"/>
<dbReference type="eggNOG" id="COG1270">
    <property type="taxonomic scope" value="Bacteria"/>
</dbReference>
<dbReference type="HOGENOM" id="CLU_054212_0_0_7"/>
<dbReference type="OrthoDB" id="9811967at2"/>
<dbReference type="UniPathway" id="UPA00148"/>
<dbReference type="Proteomes" id="UP000006732">
    <property type="component" value="Chromosome"/>
</dbReference>
<dbReference type="GO" id="GO:0005886">
    <property type="term" value="C:plasma membrane"/>
    <property type="evidence" value="ECO:0007669"/>
    <property type="project" value="UniProtKB-SubCell"/>
</dbReference>
<dbReference type="GO" id="GO:0015420">
    <property type="term" value="F:ABC-type vitamin B12 transporter activity"/>
    <property type="evidence" value="ECO:0007669"/>
    <property type="project" value="UniProtKB-UniRule"/>
</dbReference>
<dbReference type="GO" id="GO:0048472">
    <property type="term" value="F:threonine-phosphate decarboxylase activity"/>
    <property type="evidence" value="ECO:0007669"/>
    <property type="project" value="InterPro"/>
</dbReference>
<dbReference type="GO" id="GO:0009236">
    <property type="term" value="P:cobalamin biosynthetic process"/>
    <property type="evidence" value="ECO:0007669"/>
    <property type="project" value="UniProtKB-UniRule"/>
</dbReference>
<dbReference type="HAMAP" id="MF_00024">
    <property type="entry name" value="CobD_CbiB"/>
    <property type="match status" value="1"/>
</dbReference>
<dbReference type="InterPro" id="IPR004485">
    <property type="entry name" value="Cobalamin_biosynth_CobD/CbiB"/>
</dbReference>
<dbReference type="NCBIfam" id="TIGR00380">
    <property type="entry name" value="cobal_cbiB"/>
    <property type="match status" value="1"/>
</dbReference>
<dbReference type="PANTHER" id="PTHR34308">
    <property type="entry name" value="COBALAMIN BIOSYNTHESIS PROTEIN CBIB"/>
    <property type="match status" value="1"/>
</dbReference>
<dbReference type="PANTHER" id="PTHR34308:SF1">
    <property type="entry name" value="COBALAMIN BIOSYNTHESIS PROTEIN CBIB"/>
    <property type="match status" value="1"/>
</dbReference>
<dbReference type="Pfam" id="PF03186">
    <property type="entry name" value="CobD_Cbib"/>
    <property type="match status" value="1"/>
</dbReference>
<protein>
    <recommendedName>
        <fullName evidence="1">Cobalamin biosynthesis protein CobD</fullName>
    </recommendedName>
</protein>
<keyword id="KW-1003">Cell membrane</keyword>
<keyword id="KW-0169">Cobalamin biosynthesis</keyword>
<keyword id="KW-0472">Membrane</keyword>
<keyword id="KW-1185">Reference proteome</keyword>
<keyword id="KW-0812">Transmembrane</keyword>
<keyword id="KW-1133">Transmembrane helix</keyword>
<accession>A1AMC9</accession>
<evidence type="ECO:0000255" key="1">
    <source>
        <dbReference type="HAMAP-Rule" id="MF_00024"/>
    </source>
</evidence>
<gene>
    <name evidence="1" type="primary">cobD</name>
    <name type="ordered locus">Ppro_0870</name>
</gene>
<sequence>MIQPDPTVLALALLLDLCLGDPRWLPHPVVMIGRLITFLETLLRRCMANERIAGVLLLALTVTSAASVTWLMVWGSARLHALAGLMVAALLSSTCLAARSLQRESCLVADALDAGDIASARVKLSYIVGRDTVDLDEEEIWRALIETVAENTTDGIIAPLFWLALGGPVAGMAFKAVSTLDSMVGYKNERYLRLGWASARMDDLVNYIPARLTALLMVMVAPLIGLSQANAASIALRDRLNHPSPNSAHPESAAAGALGIRLGGPSTYGGLLSVKQFIGDPLRSIDGQAYRGMIRLMYATTLAMAVISLATAALLRGIHVTQL</sequence>
<organism>
    <name type="scientific">Pelobacter propionicus (strain DSM 2379 / NBRC 103807 / OttBd1)</name>
    <dbReference type="NCBI Taxonomy" id="338966"/>
    <lineage>
        <taxon>Bacteria</taxon>
        <taxon>Pseudomonadati</taxon>
        <taxon>Thermodesulfobacteriota</taxon>
        <taxon>Desulfuromonadia</taxon>
        <taxon>Desulfuromonadales</taxon>
        <taxon>Desulfuromonadaceae</taxon>
        <taxon>Pelobacter</taxon>
    </lineage>
</organism>
<feature type="chain" id="PRO_1000090206" description="Cobalamin biosynthesis protein CobD">
    <location>
        <begin position="1"/>
        <end position="323"/>
    </location>
</feature>
<feature type="transmembrane region" description="Helical" evidence="1">
    <location>
        <begin position="52"/>
        <end position="72"/>
    </location>
</feature>
<feature type="transmembrane region" description="Helical" evidence="1">
    <location>
        <begin position="73"/>
        <end position="93"/>
    </location>
</feature>
<feature type="transmembrane region" description="Helical" evidence="1">
    <location>
        <begin position="154"/>
        <end position="174"/>
    </location>
</feature>
<feature type="transmembrane region" description="Helical" evidence="1">
    <location>
        <begin position="214"/>
        <end position="234"/>
    </location>
</feature>
<feature type="transmembrane region" description="Helical" evidence="1">
    <location>
        <begin position="294"/>
        <end position="314"/>
    </location>
</feature>
<comment type="function">
    <text evidence="1">Converts cobyric acid to cobinamide by the addition of aminopropanol on the F carboxylic group.</text>
</comment>
<comment type="pathway">
    <text evidence="1">Cofactor biosynthesis; adenosylcobalamin biosynthesis.</text>
</comment>
<comment type="subcellular location">
    <subcellularLocation>
        <location evidence="1">Cell membrane</location>
        <topology evidence="1">Multi-pass membrane protein</topology>
    </subcellularLocation>
</comment>
<comment type="similarity">
    <text evidence="1">Belongs to the CobD/CbiB family.</text>
</comment>